<feature type="chain" id="PRO_0000263669" description="Nucleus accumbens-associated protein 2">
    <location>
        <begin position="1"/>
        <end position="586"/>
    </location>
</feature>
<feature type="domain" description="BTB" evidence="3">
    <location>
        <begin position="30"/>
        <end position="94"/>
    </location>
</feature>
<feature type="domain" description="BEN" evidence="4">
    <location>
        <begin position="349"/>
        <end position="446"/>
    </location>
</feature>
<feature type="region of interest" description="Disordered" evidence="5">
    <location>
        <begin position="177"/>
        <end position="196"/>
    </location>
</feature>
<feature type="region of interest" description="Disordered" evidence="5">
    <location>
        <begin position="236"/>
        <end position="272"/>
    </location>
</feature>
<feature type="region of interest" description="Disordered" evidence="5">
    <location>
        <begin position="542"/>
        <end position="586"/>
    </location>
</feature>
<feature type="compositionally biased region" description="Polar residues" evidence="5">
    <location>
        <begin position="247"/>
        <end position="261"/>
    </location>
</feature>
<feature type="compositionally biased region" description="Polar residues" evidence="5">
    <location>
        <begin position="550"/>
        <end position="572"/>
    </location>
</feature>
<feature type="cross-link" description="Glycyl lysine isopeptide (Lys-Gly) (interchain with G-Cter in SUMO2)" evidence="2">
    <location>
        <position position="171"/>
    </location>
</feature>
<feature type="cross-link" description="Glycyl lysine isopeptide (Lys-Gly) (interchain with G-Cter in SUMO2)" evidence="2">
    <location>
        <position position="215"/>
    </location>
</feature>
<feature type="cross-link" description="Glycyl lysine isopeptide (Lys-Gly) (interchain with G-Cter in SUMO2)" evidence="2">
    <location>
        <position position="297"/>
    </location>
</feature>
<feature type="cross-link" description="Glycyl lysine isopeptide (Lys-Gly) (interchain with G-Cter in SUMO2)" evidence="2">
    <location>
        <position position="427"/>
    </location>
</feature>
<feature type="cross-link" description="Glycyl lysine isopeptide (Lys-Gly) (interchain with G-Cter in SUMO2)" evidence="2">
    <location>
        <position position="454"/>
    </location>
</feature>
<feature type="sequence conflict" description="In Ref. 2; AAH22103." evidence="6" ref="2">
    <original>A</original>
    <variation>T</variation>
    <location>
        <position position="502"/>
    </location>
</feature>
<comment type="function">
    <text evidence="1">Functions as a transcriptional repressor through its association with the NuRD complex. Recruits the NuRD complex to the promoter of MDM2, leading to the repression of MDM2 transcription and subsequent stability of p53/TP53 (By similarity).</text>
</comment>
<comment type="subunit">
    <text evidence="1">Homooligomer; mediated by the BTB domain. Interacts with the NuRD complex. Interacts (via C-terminal part) with HDAC2. Interacts (via BTB domain) with MTA1, MTA2 and MTA3.</text>
</comment>
<comment type="subcellular location">
    <subcellularLocation>
        <location>Nucleus</location>
    </subcellularLocation>
    <text evidence="1">Predominantly associated with chromatin.</text>
</comment>
<gene>
    <name type="primary">Nacc2</name>
    <name type="synonym">Btbd14a</name>
</gene>
<accession>Q9DCM7</accession>
<accession>Q3TZD3</accession>
<accession>Q8VDF8</accession>
<sequence length="586" mass="63219">MSQMLHIEIPNFGNTVLGCLNEQRLLGLYCDVSIVVKGQAFKAHRAVLAASSLYFRDLFSGNSKSAFELPGTVPPACFQQILSFCYTGKLTMAASEQLVVMYTAGFLQIQHIVERGTDLMFKVSSPHCDSQTAMIEDASSEPQSPCNQLQPATAAYVTSPSVPIPLLTRVKHEAMEMPPASGPGLASKRPLETGPRDGVAVATGAAGTPGTAPLKLPRVSYYGVPSLATLIPSIQQVPYPPGERTSPGASSLPTTDSPTSYHNEEDEEDDEAYDTMVEEQYGQMYIKATGNYAVQEKPEPVPLESRSCVLIRRDLVALPASLISQIGYRCHPKLYSEGDPGEKLELVAGSGVYITRGQLMNCHLCAGVKHKVLLRRLLATFFDRNTLANSCGTGIRSSTSDPSRKPLDSRVLNAVKLYCQNFAPSFKESEMNVIAADMCTNARRVRKRWLPKIKSMLPEGVEMYRSVMGASAASLPLDPEFPSAAPQVFEQRIYAERRSDAATIVALRTDAVNVDLSTSANPAFEANEEVDGGGSVIQEVAAPEQLPADGQSSPQAFEQGNTSSSRPQTPVATATRRPEGTYAGTL</sequence>
<proteinExistence type="evidence at transcript level"/>
<dbReference type="EMBL" id="AK002651">
    <property type="protein sequence ID" value="BAB22259.1"/>
    <property type="molecule type" value="mRNA"/>
</dbReference>
<dbReference type="EMBL" id="AK147293">
    <property type="protein sequence ID" value="BAE27827.1"/>
    <property type="molecule type" value="mRNA"/>
</dbReference>
<dbReference type="EMBL" id="AK147310">
    <property type="protein sequence ID" value="BAE27838.1"/>
    <property type="molecule type" value="mRNA"/>
</dbReference>
<dbReference type="EMBL" id="AK157946">
    <property type="protein sequence ID" value="BAE34276.1"/>
    <property type="molecule type" value="mRNA"/>
</dbReference>
<dbReference type="EMBL" id="BC022103">
    <property type="protein sequence ID" value="AAH22103.1"/>
    <property type="molecule type" value="mRNA"/>
</dbReference>
<dbReference type="CCDS" id="CCDS15796.1"/>
<dbReference type="RefSeq" id="NP_001032175.1">
    <property type="nucleotide sequence ID" value="NM_001037098.1"/>
</dbReference>
<dbReference type="RefSeq" id="NP_080771.3">
    <property type="nucleotide sequence ID" value="NM_026495.3"/>
</dbReference>
<dbReference type="SMR" id="Q9DCM7"/>
<dbReference type="BioGRID" id="212585">
    <property type="interactions" value="1"/>
</dbReference>
<dbReference type="FunCoup" id="Q9DCM7">
    <property type="interactions" value="1467"/>
</dbReference>
<dbReference type="STRING" id="10090.ENSMUSP00000109796"/>
<dbReference type="GlyGen" id="Q9DCM7">
    <property type="glycosylation" value="2 sites"/>
</dbReference>
<dbReference type="iPTMnet" id="Q9DCM7"/>
<dbReference type="PhosphoSitePlus" id="Q9DCM7"/>
<dbReference type="PaxDb" id="10090-ENSMUSP00000109796"/>
<dbReference type="PeptideAtlas" id="Q9DCM7"/>
<dbReference type="ProteomicsDB" id="287345"/>
<dbReference type="TopDownProteomics" id="Q9DCM7"/>
<dbReference type="Antibodypedia" id="18675">
    <property type="antibodies" value="113 antibodies from 20 providers"/>
</dbReference>
<dbReference type="Ensembl" id="ENSMUST00000028300.6">
    <property type="protein sequence ID" value="ENSMUSP00000028300.6"/>
    <property type="gene ID" value="ENSMUSG00000026932.15"/>
</dbReference>
<dbReference type="Ensembl" id="ENSMUST00000114159.9">
    <property type="protein sequence ID" value="ENSMUSP00000109796.3"/>
    <property type="gene ID" value="ENSMUSG00000026932.15"/>
</dbReference>
<dbReference type="GeneID" id="67991"/>
<dbReference type="KEGG" id="mmu:67991"/>
<dbReference type="UCSC" id="uc008iub.1">
    <property type="organism name" value="mouse"/>
</dbReference>
<dbReference type="AGR" id="MGI:1915241"/>
<dbReference type="CTD" id="138151"/>
<dbReference type="MGI" id="MGI:1915241">
    <property type="gene designation" value="Nacc2"/>
</dbReference>
<dbReference type="VEuPathDB" id="HostDB:ENSMUSG00000026932"/>
<dbReference type="eggNOG" id="KOG1721">
    <property type="taxonomic scope" value="Eukaryota"/>
</dbReference>
<dbReference type="GeneTree" id="ENSGT00940000159244"/>
<dbReference type="HOGENOM" id="CLU_029038_1_0_1"/>
<dbReference type="InParanoid" id="Q9DCM7"/>
<dbReference type="OMA" id="QSFEQGP"/>
<dbReference type="OrthoDB" id="10261408at2759"/>
<dbReference type="PhylomeDB" id="Q9DCM7"/>
<dbReference type="TreeFam" id="TF331184"/>
<dbReference type="BioGRID-ORCS" id="67991">
    <property type="hits" value="1 hit in 77 CRISPR screens"/>
</dbReference>
<dbReference type="ChiTaRS" id="Nacc2">
    <property type="organism name" value="mouse"/>
</dbReference>
<dbReference type="PRO" id="PR:Q9DCM7"/>
<dbReference type="Proteomes" id="UP000000589">
    <property type="component" value="Chromosome 2"/>
</dbReference>
<dbReference type="RNAct" id="Q9DCM7">
    <property type="molecule type" value="protein"/>
</dbReference>
<dbReference type="Bgee" id="ENSMUSG00000026932">
    <property type="expression patterns" value="Expressed in cerebral cortex marginal layer and 269 other cell types or tissues"/>
</dbReference>
<dbReference type="ExpressionAtlas" id="Q9DCM7">
    <property type="expression patterns" value="baseline and differential"/>
</dbReference>
<dbReference type="GO" id="GO:0000785">
    <property type="term" value="C:chromatin"/>
    <property type="evidence" value="ECO:0007669"/>
    <property type="project" value="Ensembl"/>
</dbReference>
<dbReference type="GO" id="GO:0005739">
    <property type="term" value="C:mitochondrion"/>
    <property type="evidence" value="ECO:0007669"/>
    <property type="project" value="Ensembl"/>
</dbReference>
<dbReference type="GO" id="GO:0005730">
    <property type="term" value="C:nucleolus"/>
    <property type="evidence" value="ECO:0007669"/>
    <property type="project" value="Ensembl"/>
</dbReference>
<dbReference type="GO" id="GO:0005634">
    <property type="term" value="C:nucleus"/>
    <property type="evidence" value="ECO:0000250"/>
    <property type="project" value="UniProtKB"/>
</dbReference>
<dbReference type="GO" id="GO:0001227">
    <property type="term" value="F:DNA-binding transcription repressor activity, RNA polymerase II-specific"/>
    <property type="evidence" value="ECO:0007669"/>
    <property type="project" value="Ensembl"/>
</dbReference>
<dbReference type="GO" id="GO:0042826">
    <property type="term" value="F:histone deacetylase binding"/>
    <property type="evidence" value="ECO:0007669"/>
    <property type="project" value="Ensembl"/>
</dbReference>
<dbReference type="GO" id="GO:0042803">
    <property type="term" value="F:protein homodimerization activity"/>
    <property type="evidence" value="ECO:0007669"/>
    <property type="project" value="Ensembl"/>
</dbReference>
<dbReference type="GO" id="GO:0044877">
    <property type="term" value="F:protein-containing complex binding"/>
    <property type="evidence" value="ECO:0007669"/>
    <property type="project" value="Ensembl"/>
</dbReference>
<dbReference type="GO" id="GO:0000978">
    <property type="term" value="F:RNA polymerase II cis-regulatory region sequence-specific DNA binding"/>
    <property type="evidence" value="ECO:0007669"/>
    <property type="project" value="Ensembl"/>
</dbReference>
<dbReference type="GO" id="GO:0008285">
    <property type="term" value="P:negative regulation of cell population proliferation"/>
    <property type="evidence" value="ECO:0007669"/>
    <property type="project" value="Ensembl"/>
</dbReference>
<dbReference type="GO" id="GO:0045892">
    <property type="term" value="P:negative regulation of DNA-templated transcription"/>
    <property type="evidence" value="ECO:0000250"/>
    <property type="project" value="UniProtKB"/>
</dbReference>
<dbReference type="GO" id="GO:1902231">
    <property type="term" value="P:positive regulation of intrinsic apoptotic signaling pathway in response to DNA damage"/>
    <property type="evidence" value="ECO:0007669"/>
    <property type="project" value="Ensembl"/>
</dbReference>
<dbReference type="GO" id="GO:0051260">
    <property type="term" value="P:protein homooligomerization"/>
    <property type="evidence" value="ECO:0007669"/>
    <property type="project" value="Ensembl"/>
</dbReference>
<dbReference type="GO" id="GO:0031503">
    <property type="term" value="P:protein-containing complex localization"/>
    <property type="evidence" value="ECO:0007669"/>
    <property type="project" value="Ensembl"/>
</dbReference>
<dbReference type="CDD" id="cd18289">
    <property type="entry name" value="BTB_POZ_BTBD14A_NAC2"/>
    <property type="match status" value="1"/>
</dbReference>
<dbReference type="FunFam" id="1.10.10.2590:FF:000002">
    <property type="entry name" value="Putative nucleus accumbens-associated protein 2"/>
    <property type="match status" value="1"/>
</dbReference>
<dbReference type="FunFam" id="3.30.710.10:FF:000009">
    <property type="entry name" value="Zinc finger and BTB domain-containing 37"/>
    <property type="match status" value="1"/>
</dbReference>
<dbReference type="Gene3D" id="1.10.10.2590">
    <property type="entry name" value="BEN domain"/>
    <property type="match status" value="1"/>
</dbReference>
<dbReference type="Gene3D" id="3.30.710.10">
    <property type="entry name" value="Potassium Channel Kv1.1, Chain A"/>
    <property type="match status" value="1"/>
</dbReference>
<dbReference type="InterPro" id="IPR018379">
    <property type="entry name" value="BEN_domain"/>
</dbReference>
<dbReference type="InterPro" id="IPR000210">
    <property type="entry name" value="BTB/POZ_dom"/>
</dbReference>
<dbReference type="InterPro" id="IPR011333">
    <property type="entry name" value="SKP1/BTB/POZ_sf"/>
</dbReference>
<dbReference type="InterPro" id="IPR050457">
    <property type="entry name" value="ZnFinger_BTB_dom_contain"/>
</dbReference>
<dbReference type="PANTHER" id="PTHR46105">
    <property type="entry name" value="AGAP004733-PA"/>
    <property type="match status" value="1"/>
</dbReference>
<dbReference type="PANTHER" id="PTHR46105:SF2">
    <property type="entry name" value="NUCLEUS ACCUMBENS-ASSOCIATED PROTEIN 2"/>
    <property type="match status" value="1"/>
</dbReference>
<dbReference type="Pfam" id="PF10523">
    <property type="entry name" value="BEN"/>
    <property type="match status" value="1"/>
</dbReference>
<dbReference type="Pfam" id="PF00651">
    <property type="entry name" value="BTB"/>
    <property type="match status" value="1"/>
</dbReference>
<dbReference type="SMART" id="SM01025">
    <property type="entry name" value="BEN"/>
    <property type="match status" value="1"/>
</dbReference>
<dbReference type="SMART" id="SM00225">
    <property type="entry name" value="BTB"/>
    <property type="match status" value="1"/>
</dbReference>
<dbReference type="SUPFAM" id="SSF54695">
    <property type="entry name" value="POZ domain"/>
    <property type="match status" value="1"/>
</dbReference>
<dbReference type="PROSITE" id="PS51457">
    <property type="entry name" value="BEN"/>
    <property type="match status" value="1"/>
</dbReference>
<dbReference type="PROSITE" id="PS50097">
    <property type="entry name" value="BTB"/>
    <property type="match status" value="1"/>
</dbReference>
<organism>
    <name type="scientific">Mus musculus</name>
    <name type="common">Mouse</name>
    <dbReference type="NCBI Taxonomy" id="10090"/>
    <lineage>
        <taxon>Eukaryota</taxon>
        <taxon>Metazoa</taxon>
        <taxon>Chordata</taxon>
        <taxon>Craniata</taxon>
        <taxon>Vertebrata</taxon>
        <taxon>Euteleostomi</taxon>
        <taxon>Mammalia</taxon>
        <taxon>Eutheria</taxon>
        <taxon>Euarchontoglires</taxon>
        <taxon>Glires</taxon>
        <taxon>Rodentia</taxon>
        <taxon>Myomorpha</taxon>
        <taxon>Muroidea</taxon>
        <taxon>Muridae</taxon>
        <taxon>Murinae</taxon>
        <taxon>Mus</taxon>
        <taxon>Mus</taxon>
    </lineage>
</organism>
<evidence type="ECO:0000250" key="1"/>
<evidence type="ECO:0000250" key="2">
    <source>
        <dbReference type="UniProtKB" id="Q96BF6"/>
    </source>
</evidence>
<evidence type="ECO:0000255" key="3">
    <source>
        <dbReference type="PROSITE-ProRule" id="PRU00037"/>
    </source>
</evidence>
<evidence type="ECO:0000255" key="4">
    <source>
        <dbReference type="PROSITE-ProRule" id="PRU00784"/>
    </source>
</evidence>
<evidence type="ECO:0000256" key="5">
    <source>
        <dbReference type="SAM" id="MobiDB-lite"/>
    </source>
</evidence>
<evidence type="ECO:0000305" key="6"/>
<keyword id="KW-1017">Isopeptide bond</keyword>
<keyword id="KW-0539">Nucleus</keyword>
<keyword id="KW-1185">Reference proteome</keyword>
<keyword id="KW-0832">Ubl conjugation</keyword>
<reference key="1">
    <citation type="journal article" date="2005" name="Science">
        <title>The transcriptional landscape of the mammalian genome.</title>
        <authorList>
            <person name="Carninci P."/>
            <person name="Kasukawa T."/>
            <person name="Katayama S."/>
            <person name="Gough J."/>
            <person name="Frith M.C."/>
            <person name="Maeda N."/>
            <person name="Oyama R."/>
            <person name="Ravasi T."/>
            <person name="Lenhard B."/>
            <person name="Wells C."/>
            <person name="Kodzius R."/>
            <person name="Shimokawa K."/>
            <person name="Bajic V.B."/>
            <person name="Brenner S.E."/>
            <person name="Batalov S."/>
            <person name="Forrest A.R."/>
            <person name="Zavolan M."/>
            <person name="Davis M.J."/>
            <person name="Wilming L.G."/>
            <person name="Aidinis V."/>
            <person name="Allen J.E."/>
            <person name="Ambesi-Impiombato A."/>
            <person name="Apweiler R."/>
            <person name="Aturaliya R.N."/>
            <person name="Bailey T.L."/>
            <person name="Bansal M."/>
            <person name="Baxter L."/>
            <person name="Beisel K.W."/>
            <person name="Bersano T."/>
            <person name="Bono H."/>
            <person name="Chalk A.M."/>
            <person name="Chiu K.P."/>
            <person name="Choudhary V."/>
            <person name="Christoffels A."/>
            <person name="Clutterbuck D.R."/>
            <person name="Crowe M.L."/>
            <person name="Dalla E."/>
            <person name="Dalrymple B.P."/>
            <person name="de Bono B."/>
            <person name="Della Gatta G."/>
            <person name="di Bernardo D."/>
            <person name="Down T."/>
            <person name="Engstrom P."/>
            <person name="Fagiolini M."/>
            <person name="Faulkner G."/>
            <person name="Fletcher C.F."/>
            <person name="Fukushima T."/>
            <person name="Furuno M."/>
            <person name="Futaki S."/>
            <person name="Gariboldi M."/>
            <person name="Georgii-Hemming P."/>
            <person name="Gingeras T.R."/>
            <person name="Gojobori T."/>
            <person name="Green R.E."/>
            <person name="Gustincich S."/>
            <person name="Harbers M."/>
            <person name="Hayashi Y."/>
            <person name="Hensch T.K."/>
            <person name="Hirokawa N."/>
            <person name="Hill D."/>
            <person name="Huminiecki L."/>
            <person name="Iacono M."/>
            <person name="Ikeo K."/>
            <person name="Iwama A."/>
            <person name="Ishikawa T."/>
            <person name="Jakt M."/>
            <person name="Kanapin A."/>
            <person name="Katoh M."/>
            <person name="Kawasawa Y."/>
            <person name="Kelso J."/>
            <person name="Kitamura H."/>
            <person name="Kitano H."/>
            <person name="Kollias G."/>
            <person name="Krishnan S.P."/>
            <person name="Kruger A."/>
            <person name="Kummerfeld S.K."/>
            <person name="Kurochkin I.V."/>
            <person name="Lareau L.F."/>
            <person name="Lazarevic D."/>
            <person name="Lipovich L."/>
            <person name="Liu J."/>
            <person name="Liuni S."/>
            <person name="McWilliam S."/>
            <person name="Madan Babu M."/>
            <person name="Madera M."/>
            <person name="Marchionni L."/>
            <person name="Matsuda H."/>
            <person name="Matsuzawa S."/>
            <person name="Miki H."/>
            <person name="Mignone F."/>
            <person name="Miyake S."/>
            <person name="Morris K."/>
            <person name="Mottagui-Tabar S."/>
            <person name="Mulder N."/>
            <person name="Nakano N."/>
            <person name="Nakauchi H."/>
            <person name="Ng P."/>
            <person name="Nilsson R."/>
            <person name="Nishiguchi S."/>
            <person name="Nishikawa S."/>
            <person name="Nori F."/>
            <person name="Ohara O."/>
            <person name="Okazaki Y."/>
            <person name="Orlando V."/>
            <person name="Pang K.C."/>
            <person name="Pavan W.J."/>
            <person name="Pavesi G."/>
            <person name="Pesole G."/>
            <person name="Petrovsky N."/>
            <person name="Piazza S."/>
            <person name="Reed J."/>
            <person name="Reid J.F."/>
            <person name="Ring B.Z."/>
            <person name="Ringwald M."/>
            <person name="Rost B."/>
            <person name="Ruan Y."/>
            <person name="Salzberg S.L."/>
            <person name="Sandelin A."/>
            <person name="Schneider C."/>
            <person name="Schoenbach C."/>
            <person name="Sekiguchi K."/>
            <person name="Semple C.A."/>
            <person name="Seno S."/>
            <person name="Sessa L."/>
            <person name="Sheng Y."/>
            <person name="Shibata Y."/>
            <person name="Shimada H."/>
            <person name="Shimada K."/>
            <person name="Silva D."/>
            <person name="Sinclair B."/>
            <person name="Sperling S."/>
            <person name="Stupka E."/>
            <person name="Sugiura K."/>
            <person name="Sultana R."/>
            <person name="Takenaka Y."/>
            <person name="Taki K."/>
            <person name="Tammoja K."/>
            <person name="Tan S.L."/>
            <person name="Tang S."/>
            <person name="Taylor M.S."/>
            <person name="Tegner J."/>
            <person name="Teichmann S.A."/>
            <person name="Ueda H.R."/>
            <person name="van Nimwegen E."/>
            <person name="Verardo R."/>
            <person name="Wei C.L."/>
            <person name="Yagi K."/>
            <person name="Yamanishi H."/>
            <person name="Zabarovsky E."/>
            <person name="Zhu S."/>
            <person name="Zimmer A."/>
            <person name="Hide W."/>
            <person name="Bult C."/>
            <person name="Grimmond S.M."/>
            <person name="Teasdale R.D."/>
            <person name="Liu E.T."/>
            <person name="Brusic V."/>
            <person name="Quackenbush J."/>
            <person name="Wahlestedt C."/>
            <person name="Mattick J.S."/>
            <person name="Hume D.A."/>
            <person name="Kai C."/>
            <person name="Sasaki D."/>
            <person name="Tomaru Y."/>
            <person name="Fukuda S."/>
            <person name="Kanamori-Katayama M."/>
            <person name="Suzuki M."/>
            <person name="Aoki J."/>
            <person name="Arakawa T."/>
            <person name="Iida J."/>
            <person name="Imamura K."/>
            <person name="Itoh M."/>
            <person name="Kato T."/>
            <person name="Kawaji H."/>
            <person name="Kawagashira N."/>
            <person name="Kawashima T."/>
            <person name="Kojima M."/>
            <person name="Kondo S."/>
            <person name="Konno H."/>
            <person name="Nakano K."/>
            <person name="Ninomiya N."/>
            <person name="Nishio T."/>
            <person name="Okada M."/>
            <person name="Plessy C."/>
            <person name="Shibata K."/>
            <person name="Shiraki T."/>
            <person name="Suzuki S."/>
            <person name="Tagami M."/>
            <person name="Waki K."/>
            <person name="Watahiki A."/>
            <person name="Okamura-Oho Y."/>
            <person name="Suzuki H."/>
            <person name="Kawai J."/>
            <person name="Hayashizaki Y."/>
        </authorList>
    </citation>
    <scope>NUCLEOTIDE SEQUENCE [LARGE SCALE MRNA]</scope>
    <source>
        <strain>C57BL/6J</strain>
        <tissue>Inner ear</tissue>
        <tissue>Kidney</tissue>
    </source>
</reference>
<reference key="2">
    <citation type="journal article" date="2004" name="Genome Res.">
        <title>The status, quality, and expansion of the NIH full-length cDNA project: the Mammalian Gene Collection (MGC).</title>
        <authorList>
            <consortium name="The MGC Project Team"/>
        </authorList>
    </citation>
    <scope>NUCLEOTIDE SEQUENCE [LARGE SCALE MRNA]</scope>
    <source>
        <strain>Czech II</strain>
        <tissue>Mammary gland</tissue>
    </source>
</reference>
<protein>
    <recommendedName>
        <fullName>Nucleus accumbens-associated protein 2</fullName>
        <shortName>NAC-2</shortName>
    </recommendedName>
    <alternativeName>
        <fullName>BTB/POZ domain-containing protein 14A</fullName>
    </alternativeName>
</protein>
<name>NACC2_MOUSE</name>